<protein>
    <recommendedName>
        <fullName evidence="2">L-lactate dehydrogenase 1</fullName>
        <shortName evidence="2">L-LDH 1</shortName>
        <ecNumber evidence="2">1.1.1.27</ecNumber>
    </recommendedName>
</protein>
<dbReference type="EC" id="1.1.1.27" evidence="2"/>
<dbReference type="EMBL" id="BX571856">
    <property type="protein sequence ID" value="CAG39261.1"/>
    <property type="molecule type" value="Genomic_DNA"/>
</dbReference>
<dbReference type="RefSeq" id="WP_001031869.1">
    <property type="nucleotide sequence ID" value="NC_002952.2"/>
</dbReference>
<dbReference type="SMR" id="Q6GK73"/>
<dbReference type="KEGG" id="sar:SAR0234"/>
<dbReference type="HOGENOM" id="CLU_045401_1_1_9"/>
<dbReference type="UniPathway" id="UPA00554">
    <property type="reaction ID" value="UER00611"/>
</dbReference>
<dbReference type="Proteomes" id="UP000000596">
    <property type="component" value="Chromosome"/>
</dbReference>
<dbReference type="GO" id="GO:0005737">
    <property type="term" value="C:cytoplasm"/>
    <property type="evidence" value="ECO:0007669"/>
    <property type="project" value="UniProtKB-SubCell"/>
</dbReference>
<dbReference type="GO" id="GO:0004459">
    <property type="term" value="F:L-lactate dehydrogenase activity"/>
    <property type="evidence" value="ECO:0007669"/>
    <property type="project" value="UniProtKB-UniRule"/>
</dbReference>
<dbReference type="GO" id="GO:0006096">
    <property type="term" value="P:glycolytic process"/>
    <property type="evidence" value="ECO:0007669"/>
    <property type="project" value="UniProtKB-UniRule"/>
</dbReference>
<dbReference type="GO" id="GO:0006089">
    <property type="term" value="P:lactate metabolic process"/>
    <property type="evidence" value="ECO:0007669"/>
    <property type="project" value="TreeGrafter"/>
</dbReference>
<dbReference type="CDD" id="cd05291">
    <property type="entry name" value="HicDH_like"/>
    <property type="match status" value="1"/>
</dbReference>
<dbReference type="FunFam" id="3.40.50.720:FF:000018">
    <property type="entry name" value="Malate dehydrogenase"/>
    <property type="match status" value="1"/>
</dbReference>
<dbReference type="Gene3D" id="3.90.110.10">
    <property type="entry name" value="Lactate dehydrogenase/glycoside hydrolase, family 4, C-terminal"/>
    <property type="match status" value="1"/>
</dbReference>
<dbReference type="Gene3D" id="3.40.50.720">
    <property type="entry name" value="NAD(P)-binding Rossmann-like Domain"/>
    <property type="match status" value="1"/>
</dbReference>
<dbReference type="HAMAP" id="MF_00488">
    <property type="entry name" value="Lactate_dehydrog"/>
    <property type="match status" value="1"/>
</dbReference>
<dbReference type="InterPro" id="IPR001557">
    <property type="entry name" value="L-lactate/malate_DH"/>
</dbReference>
<dbReference type="InterPro" id="IPR011304">
    <property type="entry name" value="L-lactate_DH"/>
</dbReference>
<dbReference type="InterPro" id="IPR018177">
    <property type="entry name" value="L-lactate_DH_AS"/>
</dbReference>
<dbReference type="InterPro" id="IPR022383">
    <property type="entry name" value="Lactate/malate_DH_C"/>
</dbReference>
<dbReference type="InterPro" id="IPR001236">
    <property type="entry name" value="Lactate/malate_DH_N"/>
</dbReference>
<dbReference type="InterPro" id="IPR015955">
    <property type="entry name" value="Lactate_DH/Glyco_Ohase_4_C"/>
</dbReference>
<dbReference type="InterPro" id="IPR036291">
    <property type="entry name" value="NAD(P)-bd_dom_sf"/>
</dbReference>
<dbReference type="NCBIfam" id="TIGR01771">
    <property type="entry name" value="L-LDH-NAD"/>
    <property type="match status" value="1"/>
</dbReference>
<dbReference type="NCBIfam" id="NF000824">
    <property type="entry name" value="PRK00066.1"/>
    <property type="match status" value="1"/>
</dbReference>
<dbReference type="NCBIfam" id="NF004863">
    <property type="entry name" value="PRK06223.1"/>
    <property type="match status" value="1"/>
</dbReference>
<dbReference type="PANTHER" id="PTHR43128">
    <property type="entry name" value="L-2-HYDROXYCARBOXYLATE DEHYDROGENASE (NAD(P)(+))"/>
    <property type="match status" value="1"/>
</dbReference>
<dbReference type="PANTHER" id="PTHR43128:SF16">
    <property type="entry name" value="L-LACTATE DEHYDROGENASE"/>
    <property type="match status" value="1"/>
</dbReference>
<dbReference type="Pfam" id="PF02866">
    <property type="entry name" value="Ldh_1_C"/>
    <property type="match status" value="1"/>
</dbReference>
<dbReference type="Pfam" id="PF00056">
    <property type="entry name" value="Ldh_1_N"/>
    <property type="match status" value="1"/>
</dbReference>
<dbReference type="PIRSF" id="PIRSF000102">
    <property type="entry name" value="Lac_mal_DH"/>
    <property type="match status" value="1"/>
</dbReference>
<dbReference type="PRINTS" id="PR00086">
    <property type="entry name" value="LLDHDRGNASE"/>
</dbReference>
<dbReference type="SUPFAM" id="SSF56327">
    <property type="entry name" value="LDH C-terminal domain-like"/>
    <property type="match status" value="1"/>
</dbReference>
<dbReference type="SUPFAM" id="SSF51735">
    <property type="entry name" value="NAD(P)-binding Rossmann-fold domains"/>
    <property type="match status" value="1"/>
</dbReference>
<dbReference type="PROSITE" id="PS00064">
    <property type="entry name" value="L_LDH"/>
    <property type="match status" value="1"/>
</dbReference>
<gene>
    <name evidence="2" type="primary">ldh1</name>
    <name type="ordered locus">SAR0234</name>
</gene>
<keyword id="KW-0963">Cytoplasm</keyword>
<keyword id="KW-0520">NAD</keyword>
<keyword id="KW-0560">Oxidoreductase</keyword>
<keyword id="KW-0597">Phosphoprotein</keyword>
<keyword id="KW-0346">Stress response</keyword>
<organism>
    <name type="scientific">Staphylococcus aureus (strain MRSA252)</name>
    <dbReference type="NCBI Taxonomy" id="282458"/>
    <lineage>
        <taxon>Bacteria</taxon>
        <taxon>Bacillati</taxon>
        <taxon>Bacillota</taxon>
        <taxon>Bacilli</taxon>
        <taxon>Bacillales</taxon>
        <taxon>Staphylococcaceae</taxon>
        <taxon>Staphylococcus</taxon>
    </lineage>
</organism>
<sequence length="317" mass="34565">MNKFKGNKVVLIGNGAVGSIYAFSLVNQSIVDELVIIDLDAEKVRGDVMDLKHATPYSPTTVRVKAGEYSDCHDADLVVICAGAAQKPGETRLDLVSKNLKIFKSIVGEVMASKFDGIFLVATNPVDILAYATWKFSGLPKERVIGSGTILDSARFRLLLSEAFDVAPRSVDAQIIGEHGDTELPVWSHANIAGQPLKTLLEQRPEGKAQIEQIFVQTRDAAYDIIQAKGATYYGVAMGLARITEAIFRNEDAVLTVSALLEGEYDEEDVYIGVPAVINRNGIRNVVEIPLNDEEQSKFAHSAKTLKDIMAEAEELK</sequence>
<proteinExistence type="inferred from homology"/>
<comment type="function">
    <text evidence="1 2">Catalyzes the conversion of lactate to pyruvate (Potential). Appears to be the primary factor that allows S.aureus growth during nitrosative stress in both aerobically and anaerobically cultured cells (By similarity).</text>
</comment>
<comment type="catalytic activity">
    <reaction evidence="2">
        <text>(S)-lactate + NAD(+) = pyruvate + NADH + H(+)</text>
        <dbReference type="Rhea" id="RHEA:23444"/>
        <dbReference type="ChEBI" id="CHEBI:15361"/>
        <dbReference type="ChEBI" id="CHEBI:15378"/>
        <dbReference type="ChEBI" id="CHEBI:16651"/>
        <dbReference type="ChEBI" id="CHEBI:57540"/>
        <dbReference type="ChEBI" id="CHEBI:57945"/>
        <dbReference type="EC" id="1.1.1.27"/>
    </reaction>
</comment>
<comment type="pathway">
    <text evidence="2">Fermentation; pyruvate fermentation to lactate; (S)-lactate from pyruvate: step 1/1.</text>
</comment>
<comment type="subunit">
    <text evidence="2">Homotetramer.</text>
</comment>
<comment type="subcellular location">
    <subcellularLocation>
        <location evidence="2">Cytoplasm</location>
    </subcellularLocation>
</comment>
<comment type="similarity">
    <text evidence="2 3">Belongs to the LDH/MDH superfamily. LDH family.</text>
</comment>
<evidence type="ECO:0000250" key="1">
    <source>
        <dbReference type="UniProtKB" id="Q5HJD7"/>
    </source>
</evidence>
<evidence type="ECO:0000255" key="2">
    <source>
        <dbReference type="HAMAP-Rule" id="MF_00488"/>
    </source>
</evidence>
<evidence type="ECO:0000305" key="3"/>
<name>LDH1_STAAR</name>
<reference key="1">
    <citation type="journal article" date="2004" name="Proc. Natl. Acad. Sci. U.S.A.">
        <title>Complete genomes of two clinical Staphylococcus aureus strains: evidence for the rapid evolution of virulence and drug resistance.</title>
        <authorList>
            <person name="Holden M.T.G."/>
            <person name="Feil E.J."/>
            <person name="Lindsay J.A."/>
            <person name="Peacock S.J."/>
            <person name="Day N.P.J."/>
            <person name="Enright M.C."/>
            <person name="Foster T.J."/>
            <person name="Moore C.E."/>
            <person name="Hurst L."/>
            <person name="Atkin R."/>
            <person name="Barron A."/>
            <person name="Bason N."/>
            <person name="Bentley S.D."/>
            <person name="Chillingworth C."/>
            <person name="Chillingworth T."/>
            <person name="Churcher C."/>
            <person name="Clark L."/>
            <person name="Corton C."/>
            <person name="Cronin A."/>
            <person name="Doggett J."/>
            <person name="Dowd L."/>
            <person name="Feltwell T."/>
            <person name="Hance Z."/>
            <person name="Harris B."/>
            <person name="Hauser H."/>
            <person name="Holroyd S."/>
            <person name="Jagels K."/>
            <person name="James K.D."/>
            <person name="Lennard N."/>
            <person name="Line A."/>
            <person name="Mayes R."/>
            <person name="Moule S."/>
            <person name="Mungall K."/>
            <person name="Ormond D."/>
            <person name="Quail M.A."/>
            <person name="Rabbinowitsch E."/>
            <person name="Rutherford K.M."/>
            <person name="Sanders M."/>
            <person name="Sharp S."/>
            <person name="Simmonds M."/>
            <person name="Stevens K."/>
            <person name="Whitehead S."/>
            <person name="Barrell B.G."/>
            <person name="Spratt B.G."/>
            <person name="Parkhill J."/>
        </authorList>
    </citation>
    <scope>NUCLEOTIDE SEQUENCE [LARGE SCALE GENOMIC DNA]</scope>
    <source>
        <strain>MRSA252</strain>
    </source>
</reference>
<accession>Q6GK73</accession>
<feature type="chain" id="PRO_0000168383" description="L-lactate dehydrogenase 1">
    <location>
        <begin position="1"/>
        <end position="317"/>
    </location>
</feature>
<feature type="active site" description="Proton acceptor" evidence="2">
    <location>
        <position position="179"/>
    </location>
</feature>
<feature type="binding site" evidence="2">
    <location>
        <position position="17"/>
    </location>
    <ligand>
        <name>NAD(+)</name>
        <dbReference type="ChEBI" id="CHEBI:57540"/>
    </ligand>
</feature>
<feature type="binding site" evidence="2">
    <location>
        <position position="38"/>
    </location>
    <ligand>
        <name>NAD(+)</name>
        <dbReference type="ChEBI" id="CHEBI:57540"/>
    </ligand>
</feature>
<feature type="binding site" evidence="2">
    <location>
        <position position="43"/>
    </location>
    <ligand>
        <name>NAD(+)</name>
        <dbReference type="ChEBI" id="CHEBI:57540"/>
    </ligand>
</feature>
<feature type="binding site" evidence="2">
    <location>
        <position position="69"/>
    </location>
    <ligand>
        <name>NAD(+)</name>
        <dbReference type="ChEBI" id="CHEBI:57540"/>
    </ligand>
</feature>
<feature type="binding site" evidence="2">
    <location>
        <begin position="83"/>
        <end position="84"/>
    </location>
    <ligand>
        <name>NAD(+)</name>
        <dbReference type="ChEBI" id="CHEBI:57540"/>
    </ligand>
</feature>
<feature type="binding site" evidence="2">
    <location>
        <position position="86"/>
    </location>
    <ligand>
        <name>substrate</name>
    </ligand>
</feature>
<feature type="binding site" evidence="2">
    <location>
        <position position="92"/>
    </location>
    <ligand>
        <name>substrate</name>
    </ligand>
</feature>
<feature type="binding site" evidence="2">
    <location>
        <position position="105"/>
    </location>
    <ligand>
        <name>NAD(+)</name>
        <dbReference type="ChEBI" id="CHEBI:57540"/>
    </ligand>
</feature>
<feature type="binding site" evidence="2">
    <location>
        <begin position="122"/>
        <end position="124"/>
    </location>
    <ligand>
        <name>NAD(+)</name>
        <dbReference type="ChEBI" id="CHEBI:57540"/>
    </ligand>
</feature>
<feature type="binding site" evidence="2">
    <location>
        <begin position="124"/>
        <end position="127"/>
    </location>
    <ligand>
        <name>substrate</name>
    </ligand>
</feature>
<feature type="binding site" evidence="2">
    <location>
        <position position="147"/>
    </location>
    <ligand>
        <name>NAD(+)</name>
        <dbReference type="ChEBI" id="CHEBI:57540"/>
    </ligand>
</feature>
<feature type="binding site" evidence="2">
    <location>
        <begin position="152"/>
        <end position="155"/>
    </location>
    <ligand>
        <name>substrate</name>
    </ligand>
</feature>
<feature type="binding site" evidence="2">
    <location>
        <position position="232"/>
    </location>
    <ligand>
        <name>substrate</name>
    </ligand>
</feature>
<feature type="modified residue" description="Phosphotyrosine" evidence="2">
    <location>
        <position position="223"/>
    </location>
</feature>